<feature type="chain" id="PRO_0000181005" description="Large ribosomal subunit protein bL21">
    <location>
        <begin position="1"/>
        <end position="102"/>
    </location>
</feature>
<sequence>MYAIIEAGGKQFCVEEGSKIFVSKIDAEVGTEIFFDKIFMIGGSSPQIGTPYINNAKVIAKVLEHGRDKKILVFKKWRRNDSRKLQGHRQDYTALKVTGIQL</sequence>
<accession>O87886</accession>
<organism>
    <name type="scientific">Lawsonia intracellularis</name>
    <dbReference type="NCBI Taxonomy" id="29546"/>
    <lineage>
        <taxon>Bacteria</taxon>
        <taxon>Pseudomonadati</taxon>
        <taxon>Thermodesulfobacteriota</taxon>
        <taxon>Desulfovibrionia</taxon>
        <taxon>Desulfovibrionales</taxon>
        <taxon>Desulfovibrionaceae</taxon>
        <taxon>Lawsonia</taxon>
    </lineage>
</organism>
<name>RL21_LAWIN</name>
<keyword id="KW-0687">Ribonucleoprotein</keyword>
<keyword id="KW-0689">Ribosomal protein</keyword>
<keyword id="KW-0694">RNA-binding</keyword>
<keyword id="KW-0699">rRNA-binding</keyword>
<protein>
    <recommendedName>
        <fullName evidence="1">Large ribosomal subunit protein bL21</fullName>
    </recommendedName>
    <alternativeName>
        <fullName evidence="2">50S ribosomal protein L21</fullName>
    </alternativeName>
</protein>
<reference key="1">
    <citation type="journal article" date="1998" name="Microbiology">
        <title>Identification and sequencing of the groE operon and flanking genes of Lawsonia intracellularis: use in phylogeny.</title>
        <authorList>
            <person name="Dale C.J.H."/>
            <person name="Moses E.K."/>
            <person name="Ong C.C."/>
            <person name="Morrow C.J."/>
            <person name="Reed M.B."/>
            <person name="Hasse D."/>
            <person name="Strugnell R.A."/>
        </authorList>
    </citation>
    <scope>NUCLEOTIDE SEQUENCE [GENOMIC DNA]</scope>
</reference>
<proteinExistence type="inferred from homology"/>
<comment type="function">
    <text evidence="1">This protein binds to 23S rRNA in the presence of protein L20.</text>
</comment>
<comment type="subunit">
    <text evidence="1">Part of the 50S ribosomal subunit. Contacts protein L20.</text>
</comment>
<comment type="similarity">
    <text evidence="1">Belongs to the bacterial ribosomal protein bL21 family.</text>
</comment>
<evidence type="ECO:0000255" key="1">
    <source>
        <dbReference type="HAMAP-Rule" id="MF_01363"/>
    </source>
</evidence>
<evidence type="ECO:0000305" key="2"/>
<gene>
    <name evidence="1" type="primary">rplU</name>
</gene>
<dbReference type="EMBL" id="U45241">
    <property type="protein sequence ID" value="AAC36498.1"/>
    <property type="molecule type" value="Genomic_DNA"/>
</dbReference>
<dbReference type="RefSeq" id="WP_011526706.1">
    <property type="nucleotide sequence ID" value="NZ_QNHO01000001.1"/>
</dbReference>
<dbReference type="SMR" id="O87886"/>
<dbReference type="OMA" id="HRQPFTK"/>
<dbReference type="GO" id="GO:0005737">
    <property type="term" value="C:cytoplasm"/>
    <property type="evidence" value="ECO:0007669"/>
    <property type="project" value="UniProtKB-ARBA"/>
</dbReference>
<dbReference type="GO" id="GO:1990904">
    <property type="term" value="C:ribonucleoprotein complex"/>
    <property type="evidence" value="ECO:0007669"/>
    <property type="project" value="UniProtKB-KW"/>
</dbReference>
<dbReference type="GO" id="GO:0005840">
    <property type="term" value="C:ribosome"/>
    <property type="evidence" value="ECO:0007669"/>
    <property type="project" value="UniProtKB-KW"/>
</dbReference>
<dbReference type="GO" id="GO:0019843">
    <property type="term" value="F:rRNA binding"/>
    <property type="evidence" value="ECO:0007669"/>
    <property type="project" value="UniProtKB-UniRule"/>
</dbReference>
<dbReference type="GO" id="GO:0003735">
    <property type="term" value="F:structural constituent of ribosome"/>
    <property type="evidence" value="ECO:0007669"/>
    <property type="project" value="InterPro"/>
</dbReference>
<dbReference type="GO" id="GO:0006412">
    <property type="term" value="P:translation"/>
    <property type="evidence" value="ECO:0007669"/>
    <property type="project" value="UniProtKB-UniRule"/>
</dbReference>
<dbReference type="HAMAP" id="MF_01363">
    <property type="entry name" value="Ribosomal_bL21"/>
    <property type="match status" value="1"/>
</dbReference>
<dbReference type="InterPro" id="IPR028909">
    <property type="entry name" value="bL21-like"/>
</dbReference>
<dbReference type="InterPro" id="IPR036164">
    <property type="entry name" value="bL21-like_sf"/>
</dbReference>
<dbReference type="InterPro" id="IPR001787">
    <property type="entry name" value="Ribosomal_bL21"/>
</dbReference>
<dbReference type="NCBIfam" id="TIGR00061">
    <property type="entry name" value="L21"/>
    <property type="match status" value="1"/>
</dbReference>
<dbReference type="PANTHER" id="PTHR21349">
    <property type="entry name" value="50S RIBOSOMAL PROTEIN L21"/>
    <property type="match status" value="1"/>
</dbReference>
<dbReference type="PANTHER" id="PTHR21349:SF0">
    <property type="entry name" value="LARGE RIBOSOMAL SUBUNIT PROTEIN BL21M"/>
    <property type="match status" value="1"/>
</dbReference>
<dbReference type="Pfam" id="PF00829">
    <property type="entry name" value="Ribosomal_L21p"/>
    <property type="match status" value="1"/>
</dbReference>
<dbReference type="SUPFAM" id="SSF141091">
    <property type="entry name" value="L21p-like"/>
    <property type="match status" value="1"/>
</dbReference>